<organism>
    <name type="scientific">Ancylobacter novellus (strain ATCC 8093 / DSM 506 / JCM 20403 / CCM 1077 / IAM 12100 / NBRC 12443 / NCIMB 10456)</name>
    <name type="common">Starkeya novella</name>
    <dbReference type="NCBI Taxonomy" id="639283"/>
    <lineage>
        <taxon>Bacteria</taxon>
        <taxon>Pseudomonadati</taxon>
        <taxon>Pseudomonadota</taxon>
        <taxon>Alphaproteobacteria</taxon>
        <taxon>Hyphomicrobiales</taxon>
        <taxon>Xanthobacteraceae</taxon>
        <taxon>Ancylobacter</taxon>
    </lineage>
</organism>
<keyword id="KW-0002">3D-structure</keyword>
<keyword id="KW-0029">Amino-acid transport</keyword>
<keyword id="KW-0997">Cell inner membrane</keyword>
<keyword id="KW-1003">Cell membrane</keyword>
<keyword id="KW-0472">Membrane</keyword>
<keyword id="KW-0677">Repeat</keyword>
<keyword id="KW-0812">Transmembrane</keyword>
<keyword id="KW-1133">Transmembrane helix</keyword>
<keyword id="KW-0813">Transport</keyword>
<proteinExistence type="evidence at protein level"/>
<name>YDDG_ANCN5</name>
<comment type="function">
    <text evidence="2">Amino acid transporter with broad substrate specificity (PubMed:27281193). Can transport various amino acids, including L-threonine, L-methionine, L-lysine and L-glutamate (PubMed:27281193).</text>
</comment>
<comment type="catalytic activity">
    <reaction evidence="5">
        <text>L-threonine(in) = L-threonine(out)</text>
        <dbReference type="Rhea" id="RHEA:35019"/>
        <dbReference type="ChEBI" id="CHEBI:57926"/>
    </reaction>
</comment>
<comment type="catalytic activity">
    <reaction evidence="5">
        <text>L-methionine(in) = L-methionine(out)</text>
        <dbReference type="Rhea" id="RHEA:70939"/>
        <dbReference type="ChEBI" id="CHEBI:57844"/>
    </reaction>
</comment>
<comment type="catalytic activity">
    <reaction evidence="5">
        <text>L-lysine(in) = L-lysine(out)</text>
        <dbReference type="Rhea" id="RHEA:70935"/>
        <dbReference type="ChEBI" id="CHEBI:32551"/>
    </reaction>
</comment>
<comment type="catalytic activity">
    <reaction evidence="5">
        <text>L-glutamate(out) = L-glutamate(in)</text>
        <dbReference type="Rhea" id="RHEA:66336"/>
        <dbReference type="ChEBI" id="CHEBI:29985"/>
    </reaction>
</comment>
<comment type="subcellular location">
    <subcellularLocation>
        <location evidence="2">Cell inner membrane</location>
        <topology evidence="2">Multi-pass membrane protein</topology>
    </subcellularLocation>
</comment>
<comment type="domain">
    <text evidence="2">The overall structure is basket-shaped, with a large substrate-binding cavity at the center of the molecule, and is composed of inverted structural repeats related by two-fold pseudo-symmetry. The central cavity functions as the binding site for a wide range of substrates.</text>
</comment>
<comment type="similarity">
    <text evidence="4">Belongs to the drug/metabolite transporter (DMT) superfamily. Aromatic amino acid/paraquat exporter (ArAA/P-E) (TC 2.A.7.17) family.</text>
</comment>
<reference key="1">
    <citation type="journal article" date="2012" name="Stand. Genomic Sci.">
        <title>Complete genome sequence of the facultatively chemolithoautotrophic and methylotrophic alpha Proteobacterium Starkeya novella type strain (ATCC 8093(T)).</title>
        <authorList>
            <person name="Kappler U."/>
            <person name="Davenport K."/>
            <person name="Beatson S."/>
            <person name="Lucas S."/>
            <person name="Lapidus A."/>
            <person name="Copeland A."/>
            <person name="Berry K.W."/>
            <person name="Glavina Del Rio T."/>
            <person name="Hammon N."/>
            <person name="Dalin E."/>
            <person name="Tice H."/>
            <person name="Pitluck S."/>
            <person name="Richardson P."/>
            <person name="Bruce D."/>
            <person name="Goodwin L.A."/>
            <person name="Han C."/>
            <person name="Tapia R."/>
            <person name="Detter J.C."/>
            <person name="Chang Y.J."/>
            <person name="Jeffries C.D."/>
            <person name="Land M."/>
            <person name="Hauser L."/>
            <person name="Kyrpides N.C."/>
            <person name="Goker M."/>
            <person name="Ivanova N."/>
            <person name="Klenk H.P."/>
            <person name="Woyke T."/>
        </authorList>
    </citation>
    <scope>NUCLEOTIDE SEQUENCE [LARGE SCALE GENOMIC DNA]</scope>
    <source>
        <strain>ATCC 8093 / DSM 506 / JCM 20403 / CCM 1077 / IAM 12100 / NBRC 12443 / NCIMB 10456</strain>
    </source>
</reference>
<reference evidence="7" key="2">
    <citation type="journal article" date="2016" name="Nature">
        <title>Structural basis for amino acid export by DMT superfamily transporter YddG.</title>
        <authorList>
            <person name="Tsuchiya H."/>
            <person name="Doki S."/>
            <person name="Takemoto M."/>
            <person name="Ikuta T."/>
            <person name="Higuchi T."/>
            <person name="Fukui K."/>
            <person name="Usuda Y."/>
            <person name="Tabuchi E."/>
            <person name="Nagatoishi S."/>
            <person name="Tsumoto K."/>
            <person name="Nishizawa T."/>
            <person name="Ito K."/>
            <person name="Dohmae N."/>
            <person name="Ishitani R."/>
            <person name="Nureki O."/>
        </authorList>
    </citation>
    <scope>X-RAY CRYSTALLOGRAPHY (2.40 ANGSTROMS)</scope>
    <scope>FUNCTION</scope>
    <scope>SUBCELLULAR LOCATION</scope>
    <scope>TOPOLOGY</scope>
    <scope>DOMAIN</scope>
    <scope>MUTAGENESIS OF TYR-78; HIS-79; TYR-82; TRP-101 AND TRP-163</scope>
    <source>
        <strain>ATCC 8093 / DSM 506 / JCM 20403 / CCM 1077 / IAM 12100 / NBRC 12443 / NCIMB 10456</strain>
    </source>
</reference>
<evidence type="ECO:0000255" key="1"/>
<evidence type="ECO:0000269" key="2">
    <source>
    </source>
</evidence>
<evidence type="ECO:0000303" key="3">
    <source>
    </source>
</evidence>
<evidence type="ECO:0000305" key="4"/>
<evidence type="ECO:0000305" key="5">
    <source>
    </source>
</evidence>
<evidence type="ECO:0000312" key="6">
    <source>
        <dbReference type="EMBL" id="ADH90023.1"/>
    </source>
</evidence>
<evidence type="ECO:0007744" key="7">
    <source>
        <dbReference type="PDB" id="5I20"/>
    </source>
</evidence>
<evidence type="ECO:0007829" key="8">
    <source>
        <dbReference type="PDB" id="5I20"/>
    </source>
</evidence>
<protein>
    <recommendedName>
        <fullName evidence="4">Aromatic amino acid exporter YddG</fullName>
    </recommendedName>
</protein>
<gene>
    <name evidence="3" type="primary">yddG</name>
    <name evidence="6" type="ordered locus">Snov_2734</name>
</gene>
<accession>D7A5Q8</accession>
<feature type="chain" id="PRO_5003092348" description="Aromatic amino acid exporter YddG">
    <location>
        <begin position="1"/>
        <end position="287"/>
    </location>
</feature>
<feature type="topological domain" description="Cytoplasmic" evidence="2 7">
    <location>
        <begin position="1"/>
        <end position="5"/>
    </location>
</feature>
<feature type="transmembrane region" description="Helical" evidence="2 7">
    <location>
        <begin position="6"/>
        <end position="24"/>
    </location>
</feature>
<feature type="topological domain" description="Periplasmic" evidence="2 7">
    <location>
        <begin position="25"/>
        <end position="31"/>
    </location>
</feature>
<feature type="transmembrane region" description="Helical" evidence="2 7">
    <location>
        <begin position="32"/>
        <end position="54"/>
    </location>
</feature>
<feature type="topological domain" description="Cytoplasmic" evidence="2 7">
    <location>
        <begin position="55"/>
        <end position="65"/>
    </location>
</feature>
<feature type="transmembrane region" description="Helical" evidence="2 7">
    <location>
        <begin position="66"/>
        <end position="86"/>
    </location>
</feature>
<feature type="topological domain" description="Periplasmic" evidence="2 7">
    <location>
        <begin position="87"/>
        <end position="90"/>
    </location>
</feature>
<feature type="transmembrane region" description="Helical" evidence="2 7">
    <location>
        <begin position="91"/>
        <end position="111"/>
    </location>
</feature>
<feature type="topological domain" description="Cytoplasmic" evidence="2 7">
    <location>
        <begin position="112"/>
        <end position="118"/>
    </location>
</feature>
<feature type="transmembrane region" description="Helical" evidence="2 7">
    <location>
        <begin position="119"/>
        <end position="139"/>
    </location>
</feature>
<feature type="topological domain" description="Periplasmic" evidence="2 7">
    <location>
        <begin position="140"/>
        <end position="149"/>
    </location>
</feature>
<feature type="transmembrane region" description="Helical" evidence="2 7">
    <location>
        <begin position="150"/>
        <end position="170"/>
    </location>
</feature>
<feature type="topological domain" description="Cytoplasmic" evidence="2 7">
    <location>
        <begin position="171"/>
        <end position="176"/>
    </location>
</feature>
<feature type="transmembrane region" description="Helical" evidence="2 7">
    <location>
        <begin position="177"/>
        <end position="198"/>
    </location>
</feature>
<feature type="topological domain" description="Periplasmic" evidence="2 7">
    <location>
        <begin position="199"/>
        <end position="208"/>
    </location>
</feature>
<feature type="transmembrane region" description="Helical" evidence="2 7">
    <location>
        <begin position="209"/>
        <end position="233"/>
    </location>
</feature>
<feature type="topological domain" description="Cytoplasmic" evidence="2 7">
    <location>
        <begin position="234"/>
        <end position="236"/>
    </location>
</feature>
<feature type="transmembrane region" description="Helical" evidence="2 7">
    <location>
        <begin position="237"/>
        <end position="258"/>
    </location>
</feature>
<feature type="topological domain" description="Periplasmic" evidence="2 7">
    <location>
        <begin position="259"/>
        <end position="264"/>
    </location>
</feature>
<feature type="transmembrane region" description="Helical" evidence="2 7">
    <location>
        <begin position="265"/>
        <end position="284"/>
    </location>
</feature>
<feature type="topological domain" description="Cytoplasmic" evidence="2 7">
    <location>
        <begin position="285"/>
        <end position="287"/>
    </location>
</feature>
<feature type="domain" description="EamA 1" evidence="1">
    <location>
        <begin position="7"/>
        <end position="136"/>
    </location>
</feature>
<feature type="domain" description="EamA 2" evidence="1">
    <location>
        <begin position="151"/>
        <end position="281"/>
    </location>
</feature>
<feature type="mutagenesis site" description="Shows moderate effects on the transport activities of both threonine and methionine." evidence="2">
    <original>Y</original>
    <variation>A</variation>
    <location>
        <position position="78"/>
    </location>
</feature>
<feature type="mutagenesis site" description="Abolishes the transport activities for both threonine and methionine." evidence="2">
    <original>H</original>
    <variation>A</variation>
    <location>
        <position position="79"/>
    </location>
</feature>
<feature type="mutagenesis site" description="Enhances methionine transport and slightly reduces threonine transport." evidence="2">
    <original>Y</original>
    <variation>A</variation>
    <location>
        <position position="82"/>
    </location>
</feature>
<feature type="mutagenesis site" description="Exhibits decreased transport activity for threonine, but not for methionine." evidence="2">
    <original>W</original>
    <variation>A</variation>
    <location>
        <position position="101"/>
    </location>
</feature>
<feature type="mutagenesis site" description="Exhibits decreased transport activity for threonine, but not for methionine." evidence="2">
    <original>W</original>
    <variation>A</variation>
    <location>
        <position position="163"/>
    </location>
</feature>
<feature type="helix" evidence="8">
    <location>
        <begin position="3"/>
        <end position="17"/>
    </location>
</feature>
<feature type="helix" evidence="8">
    <location>
        <begin position="20"/>
        <end position="27"/>
    </location>
</feature>
<feature type="helix" evidence="8">
    <location>
        <begin position="32"/>
        <end position="53"/>
    </location>
</feature>
<feature type="helix" evidence="8">
    <location>
        <begin position="65"/>
        <end position="88"/>
    </location>
</feature>
<feature type="helix" evidence="8">
    <location>
        <begin position="91"/>
        <end position="98"/>
    </location>
</feature>
<feature type="helix" evidence="8">
    <location>
        <begin position="101"/>
        <end position="108"/>
    </location>
</feature>
<feature type="helix" evidence="8">
    <location>
        <begin position="109"/>
        <end position="111"/>
    </location>
</feature>
<feature type="strand" evidence="8">
    <location>
        <begin position="112"/>
        <end position="114"/>
    </location>
</feature>
<feature type="helix" evidence="8">
    <location>
        <begin position="119"/>
        <end position="136"/>
    </location>
</feature>
<feature type="strand" evidence="8">
    <location>
        <begin position="139"/>
        <end position="141"/>
    </location>
</feature>
<feature type="helix" evidence="8">
    <location>
        <begin position="147"/>
        <end position="149"/>
    </location>
</feature>
<feature type="helix" evidence="8">
    <location>
        <begin position="150"/>
        <end position="169"/>
    </location>
</feature>
<feature type="turn" evidence="8">
    <location>
        <begin position="170"/>
        <end position="175"/>
    </location>
</feature>
<feature type="helix" evidence="8">
    <location>
        <begin position="178"/>
        <end position="180"/>
    </location>
</feature>
<feature type="helix" evidence="8">
    <location>
        <begin position="181"/>
        <end position="199"/>
    </location>
</feature>
<feature type="helix" evidence="8">
    <location>
        <begin position="209"/>
        <end position="218"/>
    </location>
</feature>
<feature type="turn" evidence="8">
    <location>
        <begin position="219"/>
        <end position="223"/>
    </location>
</feature>
<feature type="helix" evidence="8">
    <location>
        <begin position="224"/>
        <end position="234"/>
    </location>
</feature>
<feature type="helix" evidence="8">
    <location>
        <begin position="237"/>
        <end position="243"/>
    </location>
</feature>
<feature type="helix" evidence="8">
    <location>
        <begin position="246"/>
        <end position="257"/>
    </location>
</feature>
<feature type="helix" evidence="8">
    <location>
        <begin position="265"/>
        <end position="282"/>
    </location>
</feature>
<dbReference type="EMBL" id="CP002026">
    <property type="protein sequence ID" value="ADH90023.1"/>
    <property type="molecule type" value="Genomic_DNA"/>
</dbReference>
<dbReference type="RefSeq" id="WP_013167527.1">
    <property type="nucleotide sequence ID" value="NC_014217.1"/>
</dbReference>
<dbReference type="PDB" id="5I20">
    <property type="method" value="X-ray"/>
    <property type="resolution" value="2.40 A"/>
    <property type="chains" value="A/B/C/D/E/F=1-287"/>
</dbReference>
<dbReference type="PDBsum" id="5I20"/>
<dbReference type="SMR" id="D7A5Q8"/>
<dbReference type="STRING" id="639283.Snov_2734"/>
<dbReference type="TCDB" id="2.A.7.3.66">
    <property type="family name" value="the drug/metabolite transporter (dmt) superfamily"/>
</dbReference>
<dbReference type="KEGG" id="sno:Snov_2734"/>
<dbReference type="eggNOG" id="COG0697">
    <property type="taxonomic scope" value="Bacteria"/>
</dbReference>
<dbReference type="HOGENOM" id="CLU_067094_0_0_5"/>
<dbReference type="OrthoDB" id="9795732at2"/>
<dbReference type="Proteomes" id="UP000006633">
    <property type="component" value="Chromosome"/>
</dbReference>
<dbReference type="GO" id="GO:0005886">
    <property type="term" value="C:plasma membrane"/>
    <property type="evidence" value="ECO:0007669"/>
    <property type="project" value="UniProtKB-SubCell"/>
</dbReference>
<dbReference type="GO" id="GO:0006865">
    <property type="term" value="P:amino acid transport"/>
    <property type="evidence" value="ECO:0007669"/>
    <property type="project" value="UniProtKB-KW"/>
</dbReference>
<dbReference type="InterPro" id="IPR000620">
    <property type="entry name" value="EamA_dom"/>
</dbReference>
<dbReference type="PANTHER" id="PTHR22911">
    <property type="entry name" value="ACYL-MALONYL CONDENSING ENZYME-RELATED"/>
    <property type="match status" value="1"/>
</dbReference>
<dbReference type="PANTHER" id="PTHR22911:SF76">
    <property type="entry name" value="EAMA DOMAIN-CONTAINING PROTEIN"/>
    <property type="match status" value="1"/>
</dbReference>
<dbReference type="Pfam" id="PF00892">
    <property type="entry name" value="EamA"/>
    <property type="match status" value="2"/>
</dbReference>
<dbReference type="SUPFAM" id="SSF103481">
    <property type="entry name" value="Multidrug resistance efflux transporter EmrE"/>
    <property type="match status" value="2"/>
</dbReference>
<sequence length="287" mass="29452">MSRSSATLIGFTAILLWSTLALATSSTGAVPPFLLTALTFTIGGAVGIAAGLARGVGLSVLRQPWPVWVHGIGGLFGYHFFYFSALKLAPPAEAGLVAYLWPLLIVLFSAFLPGERLRPAHVAGALMGLAGTVVLLGARAGGFGFAPEYVPGYLAAAACAVIWSVYSVASRRFARVPTEVVAGFCLATAALSALCHILFEPSVWPVGSEWLAVVALGIGPVGIAFYTWDIGMKRGDVRLLGVLSYAAPVLSTLLLVVAGFAAPSGALAIACALIVGGAAVATLLARR</sequence>